<sequence>MIYGIGIDIVEINRIKKIVIRSGDKLAKRILRKSELKLYYSKEYPVRFLSKRFAAKEAVLKAFGTGMSQGITFSQFEIFNDDLGRPMLRFFSQAAVLAKKLDLVRTHVSVSDTGLYACSIVIFEC</sequence>
<name>ACPS_BLOFL</name>
<evidence type="ECO:0000255" key="1">
    <source>
        <dbReference type="HAMAP-Rule" id="MF_00101"/>
    </source>
</evidence>
<gene>
    <name evidence="1" type="primary">acpS</name>
    <name type="ordered locus">Bfl538</name>
</gene>
<keyword id="KW-0963">Cytoplasm</keyword>
<keyword id="KW-0275">Fatty acid biosynthesis</keyword>
<keyword id="KW-0276">Fatty acid metabolism</keyword>
<keyword id="KW-0444">Lipid biosynthesis</keyword>
<keyword id="KW-0443">Lipid metabolism</keyword>
<keyword id="KW-0460">Magnesium</keyword>
<keyword id="KW-0479">Metal-binding</keyword>
<keyword id="KW-1185">Reference proteome</keyword>
<keyword id="KW-0808">Transferase</keyword>
<proteinExistence type="inferred from homology"/>
<feature type="chain" id="PRO_0000175628" description="Holo-[acyl-carrier-protein] synthase">
    <location>
        <begin position="1"/>
        <end position="125"/>
    </location>
</feature>
<feature type="binding site" evidence="1">
    <location>
        <position position="8"/>
    </location>
    <ligand>
        <name>Mg(2+)</name>
        <dbReference type="ChEBI" id="CHEBI:18420"/>
    </ligand>
</feature>
<feature type="binding site" evidence="1">
    <location>
        <position position="57"/>
    </location>
    <ligand>
        <name>Mg(2+)</name>
        <dbReference type="ChEBI" id="CHEBI:18420"/>
    </ligand>
</feature>
<accession>Q7VRR2</accession>
<protein>
    <recommendedName>
        <fullName evidence="1">Holo-[acyl-carrier-protein] synthase</fullName>
        <shortName evidence="1">Holo-ACP synthase</shortName>
        <ecNumber evidence="1">2.7.8.7</ecNumber>
    </recommendedName>
    <alternativeName>
        <fullName evidence="1">4'-phosphopantetheinyl transferase AcpS</fullName>
    </alternativeName>
</protein>
<reference key="1">
    <citation type="journal article" date="2003" name="Proc. Natl. Acad. Sci. U.S.A.">
        <title>The genome sequence of Blochmannia floridanus: comparative analysis of reduced genomes.</title>
        <authorList>
            <person name="Gil R."/>
            <person name="Silva F.J."/>
            <person name="Zientz E."/>
            <person name="Delmotte F."/>
            <person name="Gonzalez-Candelas F."/>
            <person name="Latorre A."/>
            <person name="Rausell C."/>
            <person name="Kamerbeek J."/>
            <person name="Gadau J."/>
            <person name="Hoelldobler B."/>
            <person name="van Ham R.C.H.J."/>
            <person name="Gross R."/>
            <person name="Moya A."/>
        </authorList>
    </citation>
    <scope>NUCLEOTIDE SEQUENCE [LARGE SCALE GENOMIC DNA]</scope>
</reference>
<comment type="function">
    <text evidence="1">Transfers the 4'-phosphopantetheine moiety from coenzyme A to a Ser of acyl-carrier-protein.</text>
</comment>
<comment type="catalytic activity">
    <reaction evidence="1">
        <text>apo-[ACP] + CoA = holo-[ACP] + adenosine 3',5'-bisphosphate + H(+)</text>
        <dbReference type="Rhea" id="RHEA:12068"/>
        <dbReference type="Rhea" id="RHEA-COMP:9685"/>
        <dbReference type="Rhea" id="RHEA-COMP:9690"/>
        <dbReference type="ChEBI" id="CHEBI:15378"/>
        <dbReference type="ChEBI" id="CHEBI:29999"/>
        <dbReference type="ChEBI" id="CHEBI:57287"/>
        <dbReference type="ChEBI" id="CHEBI:58343"/>
        <dbReference type="ChEBI" id="CHEBI:64479"/>
        <dbReference type="EC" id="2.7.8.7"/>
    </reaction>
</comment>
<comment type="cofactor">
    <cofactor evidence="1">
        <name>Mg(2+)</name>
        <dbReference type="ChEBI" id="CHEBI:18420"/>
    </cofactor>
</comment>
<comment type="subcellular location">
    <subcellularLocation>
        <location evidence="1">Cytoplasm</location>
    </subcellularLocation>
</comment>
<comment type="similarity">
    <text evidence="1">Belongs to the P-Pant transferase superfamily. AcpS family.</text>
</comment>
<dbReference type="EC" id="2.7.8.7" evidence="1"/>
<dbReference type="EMBL" id="BX248583">
    <property type="protein sequence ID" value="CAD83224.1"/>
    <property type="molecule type" value="Genomic_DNA"/>
</dbReference>
<dbReference type="SMR" id="Q7VRR2"/>
<dbReference type="STRING" id="203907.Bfl538"/>
<dbReference type="KEGG" id="bfl:Bfl538"/>
<dbReference type="eggNOG" id="COG0736">
    <property type="taxonomic scope" value="Bacteria"/>
</dbReference>
<dbReference type="HOGENOM" id="CLU_089696_3_1_6"/>
<dbReference type="OrthoDB" id="517356at2"/>
<dbReference type="Proteomes" id="UP000002192">
    <property type="component" value="Chromosome"/>
</dbReference>
<dbReference type="GO" id="GO:0005737">
    <property type="term" value="C:cytoplasm"/>
    <property type="evidence" value="ECO:0007669"/>
    <property type="project" value="UniProtKB-SubCell"/>
</dbReference>
<dbReference type="GO" id="GO:0008897">
    <property type="term" value="F:holo-[acyl-carrier-protein] synthase activity"/>
    <property type="evidence" value="ECO:0007669"/>
    <property type="project" value="UniProtKB-UniRule"/>
</dbReference>
<dbReference type="GO" id="GO:0000287">
    <property type="term" value="F:magnesium ion binding"/>
    <property type="evidence" value="ECO:0007669"/>
    <property type="project" value="UniProtKB-UniRule"/>
</dbReference>
<dbReference type="GO" id="GO:0006633">
    <property type="term" value="P:fatty acid biosynthetic process"/>
    <property type="evidence" value="ECO:0007669"/>
    <property type="project" value="UniProtKB-UniRule"/>
</dbReference>
<dbReference type="FunFam" id="3.90.470.20:FF:000001">
    <property type="entry name" value="Holo-[acyl-carrier-protein] synthase"/>
    <property type="match status" value="1"/>
</dbReference>
<dbReference type="Gene3D" id="3.90.470.20">
    <property type="entry name" value="4'-phosphopantetheinyl transferase domain"/>
    <property type="match status" value="1"/>
</dbReference>
<dbReference type="HAMAP" id="MF_00101">
    <property type="entry name" value="AcpS"/>
    <property type="match status" value="1"/>
</dbReference>
<dbReference type="InterPro" id="IPR008278">
    <property type="entry name" value="4-PPantetheinyl_Trfase_dom"/>
</dbReference>
<dbReference type="InterPro" id="IPR037143">
    <property type="entry name" value="4-PPantetheinyl_Trfase_dom_sf"/>
</dbReference>
<dbReference type="InterPro" id="IPR002582">
    <property type="entry name" value="ACPS"/>
</dbReference>
<dbReference type="InterPro" id="IPR004568">
    <property type="entry name" value="Ppantetheine-prot_Trfase_dom"/>
</dbReference>
<dbReference type="NCBIfam" id="TIGR00516">
    <property type="entry name" value="acpS"/>
    <property type="match status" value="1"/>
</dbReference>
<dbReference type="NCBIfam" id="TIGR00556">
    <property type="entry name" value="pantethn_trn"/>
    <property type="match status" value="1"/>
</dbReference>
<dbReference type="Pfam" id="PF01648">
    <property type="entry name" value="ACPS"/>
    <property type="match status" value="1"/>
</dbReference>
<dbReference type="SUPFAM" id="SSF56214">
    <property type="entry name" value="4'-phosphopantetheinyl transferase"/>
    <property type="match status" value="1"/>
</dbReference>
<organism>
    <name type="scientific">Blochmanniella floridana</name>
    <dbReference type="NCBI Taxonomy" id="203907"/>
    <lineage>
        <taxon>Bacteria</taxon>
        <taxon>Pseudomonadati</taxon>
        <taxon>Pseudomonadota</taxon>
        <taxon>Gammaproteobacteria</taxon>
        <taxon>Enterobacterales</taxon>
        <taxon>Enterobacteriaceae</taxon>
        <taxon>ant endosymbionts</taxon>
        <taxon>Candidatus Blochmanniella</taxon>
    </lineage>
</organism>